<evidence type="ECO:0000255" key="1">
    <source>
        <dbReference type="HAMAP-Rule" id="MF_01622"/>
    </source>
</evidence>
<organism>
    <name type="scientific">Escherichia coli O1:K1 / APEC</name>
    <dbReference type="NCBI Taxonomy" id="405955"/>
    <lineage>
        <taxon>Bacteria</taxon>
        <taxon>Pseudomonadati</taxon>
        <taxon>Pseudomonadota</taxon>
        <taxon>Gammaproteobacteria</taxon>
        <taxon>Enterobacterales</taxon>
        <taxon>Enterobacteriaceae</taxon>
        <taxon>Escherichia</taxon>
    </lineage>
</organism>
<feature type="chain" id="PRO_0000292698" description="tRNA 2-selenouridine synthase">
    <location>
        <begin position="1"/>
        <end position="364"/>
    </location>
</feature>
<feature type="domain" description="Rhodanese" evidence="1">
    <location>
        <begin position="14"/>
        <end position="137"/>
    </location>
</feature>
<feature type="active site" description="S-selanylcysteine intermediate" evidence="1">
    <location>
        <position position="97"/>
    </location>
</feature>
<name>SELU_ECOK1</name>
<protein>
    <recommendedName>
        <fullName evidence="1">tRNA 2-selenouridine synthase</fullName>
        <ecNumber evidence="1">2.9.1.3</ecNumber>
    </recommendedName>
</protein>
<sequence length="364" mass="41270">MQERHTEQDYRALLIADTPIIDVRAPIEFEQGAMPAAINLPLMNNDERAAVGICYKQQGSDAALALGHKLVAGEIRQQRMDAWRAACLQNPHGILCCARGGQRSHIVQRWLHDAGIDYPLVEGGYKALRQTAIQATIELSQKPIVLIGGCTGCGKTLLVQQQPNGVDLEGLARHRGSAFGRTLQPQLSQASFENLLAAEMLKTDARQNLRLWVLEDESRMIGSNHLPECLRERMTQATIAVVEDPFEIRLERLNEEYFLRMHHDFTHAYGDEQGWQEYCEYLHHGLSAIKRRLGLQRYNELAARLDAALTTQLTTGSTDGHLAWLVPLLEEYYDPMYRYQLEKKAEKVVFRGEWAEVAEWVKAQ</sequence>
<dbReference type="EC" id="2.9.1.3" evidence="1"/>
<dbReference type="EMBL" id="CP000468">
    <property type="protein sequence ID" value="ABI99958.1"/>
    <property type="molecule type" value="Genomic_DNA"/>
</dbReference>
<dbReference type="SMR" id="A1A8G9"/>
<dbReference type="KEGG" id="ecv:APECO1_1511"/>
<dbReference type="HOGENOM" id="CLU_043456_1_0_6"/>
<dbReference type="Proteomes" id="UP000008216">
    <property type="component" value="Chromosome"/>
</dbReference>
<dbReference type="GO" id="GO:0016765">
    <property type="term" value="F:transferase activity, transferring alkyl or aryl (other than methyl) groups"/>
    <property type="evidence" value="ECO:0007669"/>
    <property type="project" value="UniProtKB-UniRule"/>
</dbReference>
<dbReference type="GO" id="GO:0043828">
    <property type="term" value="F:tRNA 2-selenouridine synthase activity"/>
    <property type="evidence" value="ECO:0007669"/>
    <property type="project" value="UniProtKB-EC"/>
</dbReference>
<dbReference type="GO" id="GO:0002098">
    <property type="term" value="P:tRNA wobble uridine modification"/>
    <property type="evidence" value="ECO:0007669"/>
    <property type="project" value="UniProtKB-UniRule"/>
</dbReference>
<dbReference type="CDD" id="cd01520">
    <property type="entry name" value="RHOD_YbbB"/>
    <property type="match status" value="1"/>
</dbReference>
<dbReference type="FunFam" id="3.40.250.10:FF:000009">
    <property type="entry name" value="tRNA 2-selenouridine/geranyl-2-thiouridine synthase"/>
    <property type="match status" value="1"/>
</dbReference>
<dbReference type="Gene3D" id="3.40.250.10">
    <property type="entry name" value="Rhodanese-like domain"/>
    <property type="match status" value="1"/>
</dbReference>
<dbReference type="HAMAP" id="MF_01622">
    <property type="entry name" value="tRNA_sel_U_synth"/>
    <property type="match status" value="1"/>
</dbReference>
<dbReference type="InterPro" id="IPR001763">
    <property type="entry name" value="Rhodanese-like_dom"/>
</dbReference>
<dbReference type="InterPro" id="IPR036873">
    <property type="entry name" value="Rhodanese-like_dom_sf"/>
</dbReference>
<dbReference type="InterPro" id="IPR017582">
    <property type="entry name" value="SelU"/>
</dbReference>
<dbReference type="NCBIfam" id="NF008749">
    <property type="entry name" value="PRK11784.1-1"/>
    <property type="match status" value="1"/>
</dbReference>
<dbReference type="NCBIfam" id="NF008751">
    <property type="entry name" value="PRK11784.1-3"/>
    <property type="match status" value="1"/>
</dbReference>
<dbReference type="NCBIfam" id="TIGR03167">
    <property type="entry name" value="tRNA_sel_U_synt"/>
    <property type="match status" value="1"/>
</dbReference>
<dbReference type="PANTHER" id="PTHR30401">
    <property type="entry name" value="TRNA 2-SELENOURIDINE SYNTHASE"/>
    <property type="match status" value="1"/>
</dbReference>
<dbReference type="PANTHER" id="PTHR30401:SF0">
    <property type="entry name" value="TRNA 2-SELENOURIDINE SYNTHASE"/>
    <property type="match status" value="1"/>
</dbReference>
<dbReference type="SMART" id="SM00450">
    <property type="entry name" value="RHOD"/>
    <property type="match status" value="1"/>
</dbReference>
<dbReference type="SUPFAM" id="SSF52821">
    <property type="entry name" value="Rhodanese/Cell cycle control phosphatase"/>
    <property type="match status" value="1"/>
</dbReference>
<dbReference type="PROSITE" id="PS50206">
    <property type="entry name" value="RHODANESE_3"/>
    <property type="match status" value="1"/>
</dbReference>
<accession>A1A8G9</accession>
<gene>
    <name evidence="1" type="primary">selU</name>
    <name type="ordered locus">Ecok1_04650</name>
    <name type="ORF">APECO1_1511</name>
</gene>
<proteinExistence type="inferred from homology"/>
<reference key="1">
    <citation type="journal article" date="2007" name="J. Bacteriol.">
        <title>The genome sequence of avian pathogenic Escherichia coli strain O1:K1:H7 shares strong similarities with human extraintestinal pathogenic E. coli genomes.</title>
        <authorList>
            <person name="Johnson T.J."/>
            <person name="Kariyawasam S."/>
            <person name="Wannemuehler Y."/>
            <person name="Mangiamele P."/>
            <person name="Johnson S.J."/>
            <person name="Doetkott C."/>
            <person name="Skyberg J.A."/>
            <person name="Lynne A.M."/>
            <person name="Johnson J.R."/>
            <person name="Nolan L.K."/>
        </authorList>
    </citation>
    <scope>NUCLEOTIDE SEQUENCE [LARGE SCALE GENOMIC DNA]</scope>
</reference>
<keyword id="KW-1185">Reference proteome</keyword>
<keyword id="KW-0711">Selenium</keyword>
<keyword id="KW-0808">Transferase</keyword>
<comment type="function">
    <text evidence="1">Involved in the post-transcriptional modification of the uridine at the wobble position (U34) of tRNA(Lys), tRNA(Glu) and tRNA(Gln). Catalyzes the conversion of 2-thiouridine (S2U-RNA) to 2-selenouridine (Se2U-RNA). Acts in a two-step process involving geranylation of 2-thiouridine (S2U) to S-geranyl-2-thiouridine (geS2U) and subsequent selenation of the latter derivative to 2-selenouridine (Se2U) in the tRNA chain.</text>
</comment>
<comment type="catalytic activity">
    <reaction evidence="1">
        <text>5-methylaminomethyl-2-thiouridine(34) in tRNA + selenophosphate + (2E)-geranyl diphosphate + H2O + H(+) = 5-methylaminomethyl-2-selenouridine(34) in tRNA + (2E)-thiogeraniol + phosphate + diphosphate</text>
        <dbReference type="Rhea" id="RHEA:42716"/>
        <dbReference type="Rhea" id="RHEA-COMP:10195"/>
        <dbReference type="Rhea" id="RHEA-COMP:10196"/>
        <dbReference type="ChEBI" id="CHEBI:15377"/>
        <dbReference type="ChEBI" id="CHEBI:15378"/>
        <dbReference type="ChEBI" id="CHEBI:16144"/>
        <dbReference type="ChEBI" id="CHEBI:33019"/>
        <dbReference type="ChEBI" id="CHEBI:43474"/>
        <dbReference type="ChEBI" id="CHEBI:58057"/>
        <dbReference type="ChEBI" id="CHEBI:74455"/>
        <dbReference type="ChEBI" id="CHEBI:82743"/>
        <dbReference type="ChEBI" id="CHEBI:143703"/>
        <dbReference type="EC" id="2.9.1.3"/>
    </reaction>
    <physiologicalReaction direction="left-to-right" evidence="1">
        <dbReference type="Rhea" id="RHEA:42717"/>
    </physiologicalReaction>
</comment>
<comment type="catalytic activity">
    <reaction evidence="1">
        <text>5-methylaminomethyl-2-thiouridine(34) in tRNA + (2E)-geranyl diphosphate = 5-methylaminomethyl-S-(2E)-geranyl-thiouridine(34) in tRNA + diphosphate</text>
        <dbReference type="Rhea" id="RHEA:14085"/>
        <dbReference type="Rhea" id="RHEA-COMP:10195"/>
        <dbReference type="Rhea" id="RHEA-COMP:14654"/>
        <dbReference type="ChEBI" id="CHEBI:33019"/>
        <dbReference type="ChEBI" id="CHEBI:58057"/>
        <dbReference type="ChEBI" id="CHEBI:74455"/>
        <dbReference type="ChEBI" id="CHEBI:140632"/>
    </reaction>
    <physiologicalReaction direction="left-to-right" evidence="1">
        <dbReference type="Rhea" id="RHEA:14086"/>
    </physiologicalReaction>
</comment>
<comment type="catalytic activity">
    <reaction evidence="1">
        <text>5-methylaminomethyl-S-(2E)-geranyl-thiouridine(34) in tRNA + selenophosphate + H(+) = 5-methylaminomethyl-2-(Se-phospho)selenouridine(34) in tRNA + (2E)-thiogeraniol</text>
        <dbReference type="Rhea" id="RHEA:60172"/>
        <dbReference type="Rhea" id="RHEA-COMP:14654"/>
        <dbReference type="Rhea" id="RHEA-COMP:15523"/>
        <dbReference type="ChEBI" id="CHEBI:15378"/>
        <dbReference type="ChEBI" id="CHEBI:16144"/>
        <dbReference type="ChEBI" id="CHEBI:140632"/>
        <dbReference type="ChEBI" id="CHEBI:143702"/>
        <dbReference type="ChEBI" id="CHEBI:143703"/>
    </reaction>
    <physiologicalReaction direction="left-to-right" evidence="1">
        <dbReference type="Rhea" id="RHEA:60173"/>
    </physiologicalReaction>
</comment>
<comment type="catalytic activity">
    <reaction evidence="1">
        <text>5-methylaminomethyl-2-(Se-phospho)selenouridine(34) in tRNA + H2O = 5-methylaminomethyl-2-selenouridine(34) in tRNA + phosphate</text>
        <dbReference type="Rhea" id="RHEA:60176"/>
        <dbReference type="Rhea" id="RHEA-COMP:10196"/>
        <dbReference type="Rhea" id="RHEA-COMP:15523"/>
        <dbReference type="ChEBI" id="CHEBI:15377"/>
        <dbReference type="ChEBI" id="CHEBI:43474"/>
        <dbReference type="ChEBI" id="CHEBI:82743"/>
        <dbReference type="ChEBI" id="CHEBI:143702"/>
    </reaction>
    <physiologicalReaction direction="left-to-right" evidence="1">
        <dbReference type="Rhea" id="RHEA:60177"/>
    </physiologicalReaction>
</comment>
<comment type="subunit">
    <text evidence="1">Monomer.</text>
</comment>
<comment type="similarity">
    <text evidence="1">Belongs to the SelU family.</text>
</comment>